<protein>
    <recommendedName>
        <fullName evidence="1">3-phosphoshikimate 1-carboxyvinyltransferase</fullName>
        <ecNumber evidence="1">2.5.1.19</ecNumber>
    </recommendedName>
    <alternativeName>
        <fullName evidence="1">5-enolpyruvylshikimate-3-phosphate synthase</fullName>
        <shortName evidence="1">EPSP synthase</shortName>
        <shortName evidence="1">EPSPS</shortName>
    </alternativeName>
</protein>
<evidence type="ECO:0000255" key="1">
    <source>
        <dbReference type="HAMAP-Rule" id="MF_00210"/>
    </source>
</evidence>
<feature type="chain" id="PRO_1000099662" description="3-phosphoshikimate 1-carboxyvinyltransferase">
    <location>
        <begin position="1"/>
        <end position="427"/>
    </location>
</feature>
<feature type="active site" description="Proton acceptor" evidence="1">
    <location>
        <position position="315"/>
    </location>
</feature>
<feature type="binding site" evidence="1">
    <location>
        <position position="22"/>
    </location>
    <ligand>
        <name>3-phosphoshikimate</name>
        <dbReference type="ChEBI" id="CHEBI:145989"/>
    </ligand>
</feature>
<feature type="binding site" evidence="1">
    <location>
        <position position="22"/>
    </location>
    <ligand>
        <name>phosphoenolpyruvate</name>
        <dbReference type="ChEBI" id="CHEBI:58702"/>
    </ligand>
</feature>
<feature type="binding site" evidence="1">
    <location>
        <position position="23"/>
    </location>
    <ligand>
        <name>3-phosphoshikimate</name>
        <dbReference type="ChEBI" id="CHEBI:145989"/>
    </ligand>
</feature>
<feature type="binding site" evidence="1">
    <location>
        <position position="27"/>
    </location>
    <ligand>
        <name>3-phosphoshikimate</name>
        <dbReference type="ChEBI" id="CHEBI:145989"/>
    </ligand>
</feature>
<feature type="binding site" evidence="1">
    <location>
        <position position="97"/>
    </location>
    <ligand>
        <name>phosphoenolpyruvate</name>
        <dbReference type="ChEBI" id="CHEBI:58702"/>
    </ligand>
</feature>
<feature type="binding site" evidence="1">
    <location>
        <position position="125"/>
    </location>
    <ligand>
        <name>phosphoenolpyruvate</name>
        <dbReference type="ChEBI" id="CHEBI:58702"/>
    </ligand>
</feature>
<feature type="binding site" evidence="1">
    <location>
        <position position="171"/>
    </location>
    <ligand>
        <name>3-phosphoshikimate</name>
        <dbReference type="ChEBI" id="CHEBI:145989"/>
    </ligand>
</feature>
<feature type="binding site" evidence="1">
    <location>
        <position position="172"/>
    </location>
    <ligand>
        <name>3-phosphoshikimate</name>
        <dbReference type="ChEBI" id="CHEBI:145989"/>
    </ligand>
</feature>
<feature type="binding site" evidence="1">
    <location>
        <position position="173"/>
    </location>
    <ligand>
        <name>3-phosphoshikimate</name>
        <dbReference type="ChEBI" id="CHEBI:145989"/>
    </ligand>
</feature>
<feature type="binding site" evidence="1">
    <location>
        <position position="173"/>
    </location>
    <ligand>
        <name>phosphoenolpyruvate</name>
        <dbReference type="ChEBI" id="CHEBI:58702"/>
    </ligand>
</feature>
<feature type="binding site" evidence="1">
    <location>
        <position position="199"/>
    </location>
    <ligand>
        <name>3-phosphoshikimate</name>
        <dbReference type="ChEBI" id="CHEBI:145989"/>
    </ligand>
</feature>
<feature type="binding site" evidence="1">
    <location>
        <position position="315"/>
    </location>
    <ligand>
        <name>3-phosphoshikimate</name>
        <dbReference type="ChEBI" id="CHEBI:145989"/>
    </ligand>
</feature>
<feature type="binding site" evidence="1">
    <location>
        <position position="338"/>
    </location>
    <ligand>
        <name>3-phosphoshikimate</name>
        <dbReference type="ChEBI" id="CHEBI:145989"/>
    </ligand>
</feature>
<feature type="binding site" evidence="1">
    <location>
        <position position="342"/>
    </location>
    <ligand>
        <name>3-phosphoshikimate</name>
        <dbReference type="ChEBI" id="CHEBI:145989"/>
    </ligand>
</feature>
<feature type="binding site" evidence="1">
    <location>
        <position position="346"/>
    </location>
    <ligand>
        <name>phosphoenolpyruvate</name>
        <dbReference type="ChEBI" id="CHEBI:58702"/>
    </ligand>
</feature>
<feature type="binding site" evidence="1">
    <location>
        <position position="388"/>
    </location>
    <ligand>
        <name>phosphoenolpyruvate</name>
        <dbReference type="ChEBI" id="CHEBI:58702"/>
    </ligand>
</feature>
<feature type="binding site" evidence="1">
    <location>
        <position position="413"/>
    </location>
    <ligand>
        <name>phosphoenolpyruvate</name>
        <dbReference type="ChEBI" id="CHEBI:58702"/>
    </ligand>
</feature>
<comment type="function">
    <text evidence="1">Catalyzes the transfer of the enolpyruvyl moiety of phosphoenolpyruvate (PEP) to the 5-hydroxyl of shikimate-3-phosphate (S3P) to produce enolpyruvyl shikimate-3-phosphate and inorganic phosphate.</text>
</comment>
<comment type="catalytic activity">
    <reaction evidence="1">
        <text>3-phosphoshikimate + phosphoenolpyruvate = 5-O-(1-carboxyvinyl)-3-phosphoshikimate + phosphate</text>
        <dbReference type="Rhea" id="RHEA:21256"/>
        <dbReference type="ChEBI" id="CHEBI:43474"/>
        <dbReference type="ChEBI" id="CHEBI:57701"/>
        <dbReference type="ChEBI" id="CHEBI:58702"/>
        <dbReference type="ChEBI" id="CHEBI:145989"/>
        <dbReference type="EC" id="2.5.1.19"/>
    </reaction>
    <physiologicalReaction direction="left-to-right" evidence="1">
        <dbReference type="Rhea" id="RHEA:21257"/>
    </physiologicalReaction>
</comment>
<comment type="pathway">
    <text evidence="1">Metabolic intermediate biosynthesis; chorismate biosynthesis; chorismate from D-erythrose 4-phosphate and phosphoenolpyruvate: step 6/7.</text>
</comment>
<comment type="subunit">
    <text evidence="1">Monomer.</text>
</comment>
<comment type="subcellular location">
    <subcellularLocation>
        <location evidence="1">Cytoplasm</location>
    </subcellularLocation>
</comment>
<comment type="similarity">
    <text evidence="1">Belongs to the EPSP synthase family.</text>
</comment>
<organism>
    <name type="scientific">Aliivibrio salmonicida (strain LFI1238)</name>
    <name type="common">Vibrio salmonicida (strain LFI1238)</name>
    <dbReference type="NCBI Taxonomy" id="316275"/>
    <lineage>
        <taxon>Bacteria</taxon>
        <taxon>Pseudomonadati</taxon>
        <taxon>Pseudomonadota</taxon>
        <taxon>Gammaproteobacteria</taxon>
        <taxon>Vibrionales</taxon>
        <taxon>Vibrionaceae</taxon>
        <taxon>Aliivibrio</taxon>
    </lineage>
</organism>
<keyword id="KW-0028">Amino-acid biosynthesis</keyword>
<keyword id="KW-0057">Aromatic amino acid biosynthesis</keyword>
<keyword id="KW-0963">Cytoplasm</keyword>
<keyword id="KW-0808">Transferase</keyword>
<dbReference type="EC" id="2.5.1.19" evidence="1"/>
<dbReference type="EMBL" id="FM178379">
    <property type="protein sequence ID" value="CAQ79903.1"/>
    <property type="molecule type" value="Genomic_DNA"/>
</dbReference>
<dbReference type="RefSeq" id="WP_012550733.1">
    <property type="nucleotide sequence ID" value="NC_011312.1"/>
</dbReference>
<dbReference type="SMR" id="B6EIX8"/>
<dbReference type="KEGG" id="vsa:VSAL_I2218"/>
<dbReference type="eggNOG" id="COG0128">
    <property type="taxonomic scope" value="Bacteria"/>
</dbReference>
<dbReference type="HOGENOM" id="CLU_024321_0_0_6"/>
<dbReference type="UniPathway" id="UPA00053">
    <property type="reaction ID" value="UER00089"/>
</dbReference>
<dbReference type="Proteomes" id="UP000001730">
    <property type="component" value="Chromosome 1"/>
</dbReference>
<dbReference type="GO" id="GO:0005737">
    <property type="term" value="C:cytoplasm"/>
    <property type="evidence" value="ECO:0007669"/>
    <property type="project" value="UniProtKB-SubCell"/>
</dbReference>
<dbReference type="GO" id="GO:0003866">
    <property type="term" value="F:3-phosphoshikimate 1-carboxyvinyltransferase activity"/>
    <property type="evidence" value="ECO:0007669"/>
    <property type="project" value="UniProtKB-UniRule"/>
</dbReference>
<dbReference type="GO" id="GO:0008652">
    <property type="term" value="P:amino acid biosynthetic process"/>
    <property type="evidence" value="ECO:0007669"/>
    <property type="project" value="UniProtKB-KW"/>
</dbReference>
<dbReference type="GO" id="GO:0009073">
    <property type="term" value="P:aromatic amino acid family biosynthetic process"/>
    <property type="evidence" value="ECO:0007669"/>
    <property type="project" value="UniProtKB-KW"/>
</dbReference>
<dbReference type="GO" id="GO:0009423">
    <property type="term" value="P:chorismate biosynthetic process"/>
    <property type="evidence" value="ECO:0007669"/>
    <property type="project" value="UniProtKB-UniRule"/>
</dbReference>
<dbReference type="CDD" id="cd01556">
    <property type="entry name" value="EPSP_synthase"/>
    <property type="match status" value="1"/>
</dbReference>
<dbReference type="FunFam" id="3.65.10.10:FF:000003">
    <property type="entry name" value="3-phosphoshikimate 1-carboxyvinyltransferase"/>
    <property type="match status" value="1"/>
</dbReference>
<dbReference type="FunFam" id="3.65.10.10:FF:000004">
    <property type="entry name" value="3-phosphoshikimate 1-carboxyvinyltransferase"/>
    <property type="match status" value="1"/>
</dbReference>
<dbReference type="Gene3D" id="3.65.10.10">
    <property type="entry name" value="Enolpyruvate transferase domain"/>
    <property type="match status" value="2"/>
</dbReference>
<dbReference type="HAMAP" id="MF_00210">
    <property type="entry name" value="EPSP_synth"/>
    <property type="match status" value="1"/>
</dbReference>
<dbReference type="InterPro" id="IPR001986">
    <property type="entry name" value="Enolpyruvate_Tfrase_dom"/>
</dbReference>
<dbReference type="InterPro" id="IPR036968">
    <property type="entry name" value="Enolpyruvate_Tfrase_sf"/>
</dbReference>
<dbReference type="InterPro" id="IPR006264">
    <property type="entry name" value="EPSP_synthase"/>
</dbReference>
<dbReference type="InterPro" id="IPR023193">
    <property type="entry name" value="EPSP_synthase_CS"/>
</dbReference>
<dbReference type="InterPro" id="IPR013792">
    <property type="entry name" value="RNA3'P_cycl/enolpyr_Trfase_a/b"/>
</dbReference>
<dbReference type="NCBIfam" id="TIGR01356">
    <property type="entry name" value="aroA"/>
    <property type="match status" value="1"/>
</dbReference>
<dbReference type="PANTHER" id="PTHR21090">
    <property type="entry name" value="AROM/DEHYDROQUINATE SYNTHASE"/>
    <property type="match status" value="1"/>
</dbReference>
<dbReference type="PANTHER" id="PTHR21090:SF5">
    <property type="entry name" value="PENTAFUNCTIONAL AROM POLYPEPTIDE"/>
    <property type="match status" value="1"/>
</dbReference>
<dbReference type="Pfam" id="PF00275">
    <property type="entry name" value="EPSP_synthase"/>
    <property type="match status" value="1"/>
</dbReference>
<dbReference type="PIRSF" id="PIRSF000505">
    <property type="entry name" value="EPSPS"/>
    <property type="match status" value="1"/>
</dbReference>
<dbReference type="SUPFAM" id="SSF55205">
    <property type="entry name" value="EPT/RTPC-like"/>
    <property type="match status" value="1"/>
</dbReference>
<dbReference type="PROSITE" id="PS00104">
    <property type="entry name" value="EPSP_SYNTHASE_1"/>
    <property type="match status" value="1"/>
</dbReference>
<dbReference type="PROSITE" id="PS00885">
    <property type="entry name" value="EPSP_SYNTHASE_2"/>
    <property type="match status" value="1"/>
</dbReference>
<sequence>MESLTLQPISKIDGQINLPGSKSVSNRALLLAALASGKTTLTNLLDSDDIRHMLNALKALGVDYKLSEDKTVCEVNGLGQAFKSTTEALELFLGNAGTAMRPLAAALCLGEGEFILTGEPRMKERPIGHLVTALKAAGADVEYLENENYPPLKIKGTGLKGGNVDIDGSISSQFLTAFLMAAPLSSQETTINIVGDLVSKPYIDITLDIMATFGVVIENKEYKTFVVPANQSYIAPGEFLVEGDASSASYFLAAAAIKGGSVKVTGIGKKSIQGDVQFADALAAMGAEIEWGDDYVIAHKGELNAIDMDFNHIPDAAMTIATTALFAKGTTSIRNVYNWRVKETDRLAAMATELRKVGAEVEEGEDYITITPPAMLRHATIDTYDDHRMAMCFSLVALSDTPVTINDPGCTSKTFPDYFDKLKELSV</sequence>
<name>AROA_ALISL</name>
<reference key="1">
    <citation type="journal article" date="2008" name="BMC Genomics">
        <title>The genome sequence of the fish pathogen Aliivibrio salmonicida strain LFI1238 shows extensive evidence of gene decay.</title>
        <authorList>
            <person name="Hjerde E."/>
            <person name="Lorentzen M.S."/>
            <person name="Holden M.T."/>
            <person name="Seeger K."/>
            <person name="Paulsen S."/>
            <person name="Bason N."/>
            <person name="Churcher C."/>
            <person name="Harris D."/>
            <person name="Norbertczak H."/>
            <person name="Quail M.A."/>
            <person name="Sanders S."/>
            <person name="Thurston S."/>
            <person name="Parkhill J."/>
            <person name="Willassen N.P."/>
            <person name="Thomson N.R."/>
        </authorList>
    </citation>
    <scope>NUCLEOTIDE SEQUENCE [LARGE SCALE GENOMIC DNA]</scope>
    <source>
        <strain>LFI1238</strain>
    </source>
</reference>
<accession>B6EIX8</accession>
<proteinExistence type="inferred from homology"/>
<gene>
    <name evidence="1" type="primary">aroA</name>
    <name type="ordered locus">VSAL_I2218</name>
</gene>